<dbReference type="EMBL" id="U40188">
    <property type="protein sequence ID" value="AAC53201.1"/>
    <property type="molecule type" value="mRNA"/>
</dbReference>
<dbReference type="EMBL" id="BC090332">
    <property type="protein sequence ID" value="AAH90332.1"/>
    <property type="molecule type" value="mRNA"/>
</dbReference>
<dbReference type="PIR" id="JC5511">
    <property type="entry name" value="JC5511"/>
</dbReference>
<dbReference type="RefSeq" id="NP_598299.1">
    <property type="nucleotide sequence ID" value="NM_133615.1"/>
</dbReference>
<dbReference type="SMR" id="Q62880"/>
<dbReference type="FunCoup" id="Q62880">
    <property type="interactions" value="1852"/>
</dbReference>
<dbReference type="STRING" id="10116.ENSRNOP00000073996"/>
<dbReference type="GlyGen" id="Q62880">
    <property type="glycosylation" value="1 site"/>
</dbReference>
<dbReference type="iPTMnet" id="Q62880"/>
<dbReference type="PhosphoSitePlus" id="Q62880"/>
<dbReference type="PaxDb" id="10116-ENSRNOP00000068201"/>
<dbReference type="GeneID" id="171152"/>
<dbReference type="KEGG" id="rno:171152"/>
<dbReference type="UCSC" id="RGD:621116">
    <property type="organism name" value="rat"/>
</dbReference>
<dbReference type="AGR" id="RGD:621116"/>
<dbReference type="CTD" id="51616"/>
<dbReference type="RGD" id="621116">
    <property type="gene designation" value="Taf9b"/>
</dbReference>
<dbReference type="VEuPathDB" id="HostDB:ENSRNOG00000061102"/>
<dbReference type="eggNOG" id="KOG3334">
    <property type="taxonomic scope" value="Eukaryota"/>
</dbReference>
<dbReference type="InParanoid" id="Q62880"/>
<dbReference type="PhylomeDB" id="Q62880"/>
<dbReference type="TreeFam" id="TF351417"/>
<dbReference type="Reactome" id="R-RNO-5689880">
    <property type="pathway name" value="Ub-specific processing proteases"/>
</dbReference>
<dbReference type="Reactome" id="R-RNO-674695">
    <property type="pathway name" value="RNA Polymerase II Pre-transcription Events"/>
</dbReference>
<dbReference type="Reactome" id="R-RNO-6804756">
    <property type="pathway name" value="Regulation of TP53 Activity through Phosphorylation"/>
</dbReference>
<dbReference type="Reactome" id="R-RNO-73776">
    <property type="pathway name" value="RNA Polymerase II Promoter Escape"/>
</dbReference>
<dbReference type="Reactome" id="R-RNO-73779">
    <property type="pathway name" value="RNA Polymerase II Transcription Pre-Initiation And Promoter Opening"/>
</dbReference>
<dbReference type="Reactome" id="R-RNO-75953">
    <property type="pathway name" value="RNA Polymerase II Transcription Initiation"/>
</dbReference>
<dbReference type="Reactome" id="R-RNO-76042">
    <property type="pathway name" value="RNA Polymerase II Transcription Initiation And Promoter Clearance"/>
</dbReference>
<dbReference type="PRO" id="PR:Q62880"/>
<dbReference type="Proteomes" id="UP000002494">
    <property type="component" value="Chromosome X"/>
</dbReference>
<dbReference type="Bgee" id="ENSRNOG00000061102">
    <property type="expression patterns" value="Expressed in cerebellum and 20 other cell types or tissues"/>
</dbReference>
<dbReference type="ExpressionAtlas" id="Q62880">
    <property type="expression patterns" value="baseline and differential"/>
</dbReference>
<dbReference type="GO" id="GO:0005669">
    <property type="term" value="C:transcription factor TFIID complex"/>
    <property type="evidence" value="ECO:0000266"/>
    <property type="project" value="RGD"/>
</dbReference>
<dbReference type="GO" id="GO:0033276">
    <property type="term" value="C:transcription factor TFTC complex"/>
    <property type="evidence" value="ECO:0000266"/>
    <property type="project" value="RGD"/>
</dbReference>
<dbReference type="GO" id="GO:0046982">
    <property type="term" value="F:protein heterodimerization activity"/>
    <property type="evidence" value="ECO:0007669"/>
    <property type="project" value="InterPro"/>
</dbReference>
<dbReference type="GO" id="GO:0006352">
    <property type="term" value="P:DNA-templated transcription initiation"/>
    <property type="evidence" value="ECO:0007669"/>
    <property type="project" value="InterPro"/>
</dbReference>
<dbReference type="GO" id="GO:0043066">
    <property type="term" value="P:negative regulation of apoptotic process"/>
    <property type="evidence" value="ECO:0000266"/>
    <property type="project" value="RGD"/>
</dbReference>
<dbReference type="GO" id="GO:0000122">
    <property type="term" value="P:negative regulation of transcription by RNA polymerase II"/>
    <property type="evidence" value="ECO:0000266"/>
    <property type="project" value="RGD"/>
</dbReference>
<dbReference type="GO" id="GO:0030307">
    <property type="term" value="P:positive regulation of cell growth"/>
    <property type="evidence" value="ECO:0000266"/>
    <property type="project" value="RGD"/>
</dbReference>
<dbReference type="GO" id="GO:0012501">
    <property type="term" value="P:programmed cell death"/>
    <property type="evidence" value="ECO:0000270"/>
    <property type="project" value="RGD"/>
</dbReference>
<dbReference type="GO" id="GO:0050821">
    <property type="term" value="P:protein stabilization"/>
    <property type="evidence" value="ECO:0000266"/>
    <property type="project" value="RGD"/>
</dbReference>
<dbReference type="GO" id="GO:0072712">
    <property type="term" value="P:response to thiabendazole"/>
    <property type="evidence" value="ECO:0000270"/>
    <property type="project" value="RGD"/>
</dbReference>
<dbReference type="GO" id="GO:0006366">
    <property type="term" value="P:transcription by RNA polymerase II"/>
    <property type="evidence" value="ECO:0007669"/>
    <property type="project" value="GOC"/>
</dbReference>
<dbReference type="CDD" id="cd07979">
    <property type="entry name" value="HFD_TAF9"/>
    <property type="match status" value="1"/>
</dbReference>
<dbReference type="FunFam" id="1.10.20.10:FF:000018">
    <property type="entry name" value="Transcription initiation factor TFIID subunit 9"/>
    <property type="match status" value="1"/>
</dbReference>
<dbReference type="Gene3D" id="1.10.20.10">
    <property type="entry name" value="Histone, subunit A"/>
    <property type="match status" value="1"/>
</dbReference>
<dbReference type="InterPro" id="IPR009072">
    <property type="entry name" value="Histone-fold"/>
</dbReference>
<dbReference type="InterPro" id="IPR003162">
    <property type="entry name" value="TFIID-31"/>
</dbReference>
<dbReference type="InterPro" id="IPR051431">
    <property type="entry name" value="TFIID_subunit_9"/>
</dbReference>
<dbReference type="PANTHER" id="PTHR48068">
    <property type="entry name" value="TAF9 RNA POLYMERASE II, TATA BOX-BINDING PROTEIN (TBP)-ASSOCIATED FACTOR"/>
    <property type="match status" value="1"/>
</dbReference>
<dbReference type="PANTHER" id="PTHR48068:SF5">
    <property type="entry name" value="TRANSCRIPTION INITIATION FACTOR TFIID SUBUNIT 9B"/>
    <property type="match status" value="1"/>
</dbReference>
<dbReference type="Pfam" id="PF02291">
    <property type="entry name" value="TFIID-31kDa"/>
    <property type="match status" value="1"/>
</dbReference>
<dbReference type="SUPFAM" id="SSF47113">
    <property type="entry name" value="Histone-fold"/>
    <property type="match status" value="1"/>
</dbReference>
<organism>
    <name type="scientific">Rattus norvegicus</name>
    <name type="common">Rat</name>
    <dbReference type="NCBI Taxonomy" id="10116"/>
    <lineage>
        <taxon>Eukaryota</taxon>
        <taxon>Metazoa</taxon>
        <taxon>Chordata</taxon>
        <taxon>Craniata</taxon>
        <taxon>Vertebrata</taxon>
        <taxon>Euteleostomi</taxon>
        <taxon>Mammalia</taxon>
        <taxon>Eutheria</taxon>
        <taxon>Euarchontoglires</taxon>
        <taxon>Glires</taxon>
        <taxon>Rodentia</taxon>
        <taxon>Myomorpha</taxon>
        <taxon>Muroidea</taxon>
        <taxon>Muridae</taxon>
        <taxon>Murinae</taxon>
        <taxon>Rattus</taxon>
    </lineage>
</organism>
<reference key="1">
    <citation type="journal article" date="2004" name="Genome Res.">
        <title>The status, quality, and expansion of the NIH full-length cDNA project: the Mammalian Gene Collection (MGC).</title>
        <authorList>
            <consortium name="The MGC Project Team"/>
        </authorList>
    </citation>
    <scope>NUCLEOTIDE SEQUENCE [LARGE SCALE MRNA]</scope>
    <source>
        <strain>Brown Norway</strain>
        <tissue>Heart</tissue>
    </source>
</reference>
<reference key="2">
    <citation type="journal article" date="1997" name="Biochem. Biophys. Res. Commun.">
        <title>Rat TAFII31 gene is induced upon programmed cell death in differentiated PC12 cells deprived of NGF.</title>
        <authorList>
            <person name="Aoki T."/>
            <person name="Koike T."/>
            <person name="Nakano T."/>
            <person name="Shibahara K."/>
            <person name="Nishimura H."/>
            <person name="Kikuchi H."/>
            <person name="Honjo T."/>
        </authorList>
    </citation>
    <scope>NUCLEOTIDE SEQUENCE [MRNA] OF 5-258</scope>
    <scope>INDUCTION</scope>
</reference>
<feature type="chain" id="PRO_0000118893" description="Transcription initiation factor TFIID subunit 9B">
    <location>
        <begin position="1"/>
        <end position="258"/>
    </location>
</feature>
<feature type="region of interest" description="Disordered" evidence="3">
    <location>
        <begin position="227"/>
        <end position="258"/>
    </location>
</feature>
<feature type="compositionally biased region" description="Polar residues" evidence="3">
    <location>
        <begin position="227"/>
        <end position="236"/>
    </location>
</feature>
<feature type="compositionally biased region" description="Acidic residues" evidence="3">
    <location>
        <begin position="244"/>
        <end position="258"/>
    </location>
</feature>
<feature type="modified residue" description="N-acetylmethionine" evidence="2">
    <location>
        <position position="1"/>
    </location>
</feature>
<feature type="modified residue" description="Phosphoserine" evidence="2">
    <location>
        <position position="147"/>
    </location>
</feature>
<feature type="modified residue" description="Phosphothreonine" evidence="2">
    <location>
        <position position="159"/>
    </location>
</feature>
<feature type="modified residue" description="Phosphothreonine" evidence="2">
    <location>
        <position position="174"/>
    </location>
</feature>
<feature type="modified residue" description="Phosphoserine" evidence="2">
    <location>
        <position position="177"/>
    </location>
</feature>
<feature type="sequence conflict" description="In Ref. 2; AAC53201." evidence="5" ref="2">
    <original>K</original>
    <variation>T</variation>
    <location>
        <position position="217"/>
    </location>
</feature>
<proteinExistence type="evidence at transcript level"/>
<comment type="function">
    <text evidence="1">Essential for cell viability. TAF9 and TAF9L are involved in transcriptional activation as well as repression of distinct but overlapping sets of genes. May have a role in gene regulation associated with apoptosis. TAFs are components of the transcription factor IID (TFIID) complex, the TBP-free TAFII complex (TFTC), the PCAF histone acetylase complex and the STAGA transcription coactivator-HAT complex. TFIID or TFTC are essential for the regulation of RNA polymerase II-mediated transcription (By similarity).</text>
</comment>
<comment type="subunit">
    <text evidence="1">Binds TAF5 and TAF6. Component of TFIID and the TATA-binding protein-free TAF complex (TFTC). TFIID is composed of TATA binding protein (TBP) and a number of TBP-associated factors (TAFs). Binds N-terminal domain of p53/TP53 which is essential for transcription (By similarity).</text>
</comment>
<comment type="subcellular location">
    <subcellularLocation>
        <location evidence="1">Nucleus</location>
    </subcellularLocation>
</comment>
<comment type="induction">
    <text evidence="4">By apoptotic signals in PC12 cells.</text>
</comment>
<comment type="similarity">
    <text evidence="5">Belongs to the TAF9 family.</text>
</comment>
<accession>Q62880</accession>
<accession>Q5EAN8</accession>
<name>TAF9B_RAT</name>
<evidence type="ECO:0000250" key="1"/>
<evidence type="ECO:0000250" key="2">
    <source>
        <dbReference type="UniProtKB" id="Q9HBM6"/>
    </source>
</evidence>
<evidence type="ECO:0000256" key="3">
    <source>
        <dbReference type="SAM" id="MobiDB-lite"/>
    </source>
</evidence>
<evidence type="ECO:0000269" key="4">
    <source>
    </source>
</evidence>
<evidence type="ECO:0000305" key="5"/>
<keyword id="KW-0007">Acetylation</keyword>
<keyword id="KW-0539">Nucleus</keyword>
<keyword id="KW-0597">Phosphoprotein</keyword>
<keyword id="KW-1185">Reference proteome</keyword>
<keyword id="KW-0804">Transcription</keyword>
<keyword id="KW-0805">Transcription regulation</keyword>
<protein>
    <recommendedName>
        <fullName>Transcription initiation factor TFIID subunit 9B</fullName>
    </recommendedName>
    <alternativeName>
        <fullName>Neuronal cell death-related gene in neuron 7</fullName>
        <shortName>DN-7</shortName>
    </alternativeName>
    <alternativeName>
        <fullName>Transcription initiation factor TFIID subunit 9-like</fullName>
    </alternativeName>
    <alternativeName>
        <fullName>Transcription-associated factor TAFII31L</fullName>
    </alternativeName>
</protein>
<gene>
    <name type="primary">Taf9b</name>
    <name type="synonym">Dn7</name>
    <name type="synonym">Taf9l</name>
</gene>
<sequence length="258" mass="28220">MEPSKMAPLKNAPRDALVMAQILKDMGITDYEPRVINQMLEFAFRYVTTILDDAKIYSSHAKKPTVDADDVRLAIQCRADQSFTSPPPRDFLLDIARQKNQTPLPLIKPYAGPRLPPDRYCLTAPNYRLKSLVKKGPNQGRLVPRLSVGAVSSRPTTPTVAPPQAVSVPNKVATPVSVTSQRFAVQIPTSQSTPAKPAPAATSVQNVLINPSMIGSKNILITTNMVSSQSTATDSNPLKRKHDDDDDDDDDDDDNDTM</sequence>